<sequence length="252" mass="27430">MITKRIIPCLDVRKGRVVKGVNFVDIKDAGDPVALARAYNDQGADEIVFLDITASHEERYILLDVVKKTSEEIFIPLTVGGGIRTVEDMRQIIKSGADKVSINSSAVKNPSMITDCARQFGSQAVVIAMDVKRGADGRYEVYVRGGREKTGLEAVDWARRVAQLGAGEILLTSMDRDGTKSGYDLEITKRISQAVNIPVIASGGAGSVQDFADAFIEGQADAALAASLFHYNEVSIPRLKQSLHEMDISMRR</sequence>
<protein>
    <recommendedName>
        <fullName evidence="1">Imidazole glycerol phosphate synthase subunit HisF</fullName>
        <ecNumber evidence="1">4.3.2.10</ecNumber>
    </recommendedName>
    <alternativeName>
        <fullName evidence="1">IGP synthase cyclase subunit</fullName>
    </alternativeName>
    <alternativeName>
        <fullName evidence="1">IGP synthase subunit HisF</fullName>
    </alternativeName>
    <alternativeName>
        <fullName evidence="1">ImGP synthase subunit HisF</fullName>
        <shortName evidence="1">IGPS subunit HisF</shortName>
    </alternativeName>
</protein>
<comment type="function">
    <text evidence="1">IGPS catalyzes the conversion of PRFAR and glutamine to IGP, AICAR and glutamate. The HisF subunit catalyzes the cyclization activity that produces IGP and AICAR from PRFAR using the ammonia provided by the HisH subunit.</text>
</comment>
<comment type="catalytic activity">
    <reaction evidence="1">
        <text>5-[(5-phospho-1-deoxy-D-ribulos-1-ylimino)methylamino]-1-(5-phospho-beta-D-ribosyl)imidazole-4-carboxamide + L-glutamine = D-erythro-1-(imidazol-4-yl)glycerol 3-phosphate + 5-amino-1-(5-phospho-beta-D-ribosyl)imidazole-4-carboxamide + L-glutamate + H(+)</text>
        <dbReference type="Rhea" id="RHEA:24793"/>
        <dbReference type="ChEBI" id="CHEBI:15378"/>
        <dbReference type="ChEBI" id="CHEBI:29985"/>
        <dbReference type="ChEBI" id="CHEBI:58278"/>
        <dbReference type="ChEBI" id="CHEBI:58359"/>
        <dbReference type="ChEBI" id="CHEBI:58475"/>
        <dbReference type="ChEBI" id="CHEBI:58525"/>
        <dbReference type="EC" id="4.3.2.10"/>
    </reaction>
</comment>
<comment type="pathway">
    <text evidence="1">Amino-acid biosynthesis; L-histidine biosynthesis; L-histidine from 5-phospho-alpha-D-ribose 1-diphosphate: step 5/9.</text>
</comment>
<comment type="subunit">
    <text evidence="1">Heterodimer of HisH and HisF.</text>
</comment>
<comment type="subcellular location">
    <subcellularLocation>
        <location evidence="1">Cytoplasm</location>
    </subcellularLocation>
</comment>
<comment type="similarity">
    <text evidence="1">Belongs to the HisA/HisF family.</text>
</comment>
<accession>A6TKT6</accession>
<evidence type="ECO:0000255" key="1">
    <source>
        <dbReference type="HAMAP-Rule" id="MF_01013"/>
    </source>
</evidence>
<gene>
    <name evidence="1" type="primary">hisF</name>
    <name type="ordered locus">Amet_0577</name>
</gene>
<feature type="chain" id="PRO_1000063020" description="Imidazole glycerol phosphate synthase subunit HisF">
    <location>
        <begin position="1"/>
        <end position="252"/>
    </location>
</feature>
<feature type="active site" evidence="1">
    <location>
        <position position="11"/>
    </location>
</feature>
<feature type="active site" evidence="1">
    <location>
        <position position="130"/>
    </location>
</feature>
<proteinExistence type="inferred from homology"/>
<reference key="1">
    <citation type="journal article" date="2016" name="Genome Announc.">
        <title>Complete genome sequence of Alkaliphilus metalliredigens strain QYMF, an alkaliphilic and metal-reducing bacterium isolated from borax-contaminated leachate ponds.</title>
        <authorList>
            <person name="Hwang C."/>
            <person name="Copeland A."/>
            <person name="Lucas S."/>
            <person name="Lapidus A."/>
            <person name="Barry K."/>
            <person name="Detter J.C."/>
            <person name="Glavina Del Rio T."/>
            <person name="Hammon N."/>
            <person name="Israni S."/>
            <person name="Dalin E."/>
            <person name="Tice H."/>
            <person name="Pitluck S."/>
            <person name="Chertkov O."/>
            <person name="Brettin T."/>
            <person name="Bruce D."/>
            <person name="Han C."/>
            <person name="Schmutz J."/>
            <person name="Larimer F."/>
            <person name="Land M.L."/>
            <person name="Hauser L."/>
            <person name="Kyrpides N."/>
            <person name="Mikhailova N."/>
            <person name="Ye Q."/>
            <person name="Zhou J."/>
            <person name="Richardson P."/>
            <person name="Fields M.W."/>
        </authorList>
    </citation>
    <scope>NUCLEOTIDE SEQUENCE [LARGE SCALE GENOMIC DNA]</scope>
    <source>
        <strain>QYMF</strain>
    </source>
</reference>
<keyword id="KW-0028">Amino-acid biosynthesis</keyword>
<keyword id="KW-0963">Cytoplasm</keyword>
<keyword id="KW-0368">Histidine biosynthesis</keyword>
<keyword id="KW-0456">Lyase</keyword>
<keyword id="KW-1185">Reference proteome</keyword>
<name>HIS6_ALKMQ</name>
<organism>
    <name type="scientific">Alkaliphilus metalliredigens (strain QYMF)</name>
    <dbReference type="NCBI Taxonomy" id="293826"/>
    <lineage>
        <taxon>Bacteria</taxon>
        <taxon>Bacillati</taxon>
        <taxon>Bacillota</taxon>
        <taxon>Clostridia</taxon>
        <taxon>Peptostreptococcales</taxon>
        <taxon>Natronincolaceae</taxon>
        <taxon>Alkaliphilus</taxon>
    </lineage>
</organism>
<dbReference type="EC" id="4.3.2.10" evidence="1"/>
<dbReference type="EMBL" id="CP000724">
    <property type="protein sequence ID" value="ABR46804.1"/>
    <property type="molecule type" value="Genomic_DNA"/>
</dbReference>
<dbReference type="RefSeq" id="WP_011971712.1">
    <property type="nucleotide sequence ID" value="NC_009633.1"/>
</dbReference>
<dbReference type="SMR" id="A6TKT6"/>
<dbReference type="STRING" id="293826.Amet_0577"/>
<dbReference type="KEGG" id="amt:Amet_0577"/>
<dbReference type="eggNOG" id="COG0107">
    <property type="taxonomic scope" value="Bacteria"/>
</dbReference>
<dbReference type="HOGENOM" id="CLU_048577_4_0_9"/>
<dbReference type="OrthoDB" id="9781903at2"/>
<dbReference type="UniPathway" id="UPA00031">
    <property type="reaction ID" value="UER00010"/>
</dbReference>
<dbReference type="Proteomes" id="UP000001572">
    <property type="component" value="Chromosome"/>
</dbReference>
<dbReference type="GO" id="GO:0005737">
    <property type="term" value="C:cytoplasm"/>
    <property type="evidence" value="ECO:0007669"/>
    <property type="project" value="UniProtKB-SubCell"/>
</dbReference>
<dbReference type="GO" id="GO:0000107">
    <property type="term" value="F:imidazoleglycerol-phosphate synthase activity"/>
    <property type="evidence" value="ECO:0007669"/>
    <property type="project" value="UniProtKB-UniRule"/>
</dbReference>
<dbReference type="GO" id="GO:0016833">
    <property type="term" value="F:oxo-acid-lyase activity"/>
    <property type="evidence" value="ECO:0007669"/>
    <property type="project" value="InterPro"/>
</dbReference>
<dbReference type="GO" id="GO:0000105">
    <property type="term" value="P:L-histidine biosynthetic process"/>
    <property type="evidence" value="ECO:0007669"/>
    <property type="project" value="UniProtKB-UniRule"/>
</dbReference>
<dbReference type="CDD" id="cd04731">
    <property type="entry name" value="HisF"/>
    <property type="match status" value="1"/>
</dbReference>
<dbReference type="FunFam" id="3.20.20.70:FF:000006">
    <property type="entry name" value="Imidazole glycerol phosphate synthase subunit HisF"/>
    <property type="match status" value="1"/>
</dbReference>
<dbReference type="Gene3D" id="3.20.20.70">
    <property type="entry name" value="Aldolase class I"/>
    <property type="match status" value="1"/>
</dbReference>
<dbReference type="HAMAP" id="MF_01013">
    <property type="entry name" value="HisF"/>
    <property type="match status" value="1"/>
</dbReference>
<dbReference type="InterPro" id="IPR013785">
    <property type="entry name" value="Aldolase_TIM"/>
</dbReference>
<dbReference type="InterPro" id="IPR020021">
    <property type="entry name" value="Glycosyl_amidation-assoc_WbuZ"/>
</dbReference>
<dbReference type="InterPro" id="IPR006062">
    <property type="entry name" value="His_biosynth"/>
</dbReference>
<dbReference type="InterPro" id="IPR004651">
    <property type="entry name" value="HisF"/>
</dbReference>
<dbReference type="InterPro" id="IPR050064">
    <property type="entry name" value="IGPS_HisA/HisF"/>
</dbReference>
<dbReference type="InterPro" id="IPR011060">
    <property type="entry name" value="RibuloseP-bd_barrel"/>
</dbReference>
<dbReference type="NCBIfam" id="TIGR00735">
    <property type="entry name" value="hisF"/>
    <property type="match status" value="1"/>
</dbReference>
<dbReference type="NCBIfam" id="TIGR03572">
    <property type="entry name" value="WbuZ"/>
    <property type="match status" value="1"/>
</dbReference>
<dbReference type="PANTHER" id="PTHR21235:SF2">
    <property type="entry name" value="IMIDAZOLE GLYCEROL PHOSPHATE SYNTHASE HISHF"/>
    <property type="match status" value="1"/>
</dbReference>
<dbReference type="PANTHER" id="PTHR21235">
    <property type="entry name" value="IMIDAZOLE GLYCEROL PHOSPHATE SYNTHASE SUBUNIT HISF/H IGP SYNTHASE SUBUNIT HISF/H"/>
    <property type="match status" value="1"/>
</dbReference>
<dbReference type="Pfam" id="PF00977">
    <property type="entry name" value="His_biosynth"/>
    <property type="match status" value="1"/>
</dbReference>
<dbReference type="SUPFAM" id="SSF51366">
    <property type="entry name" value="Ribulose-phoshate binding barrel"/>
    <property type="match status" value="1"/>
</dbReference>